<accession>Q4QP24</accession>
<sequence>MITIKKGLDLPIAGKPAQVIHSGNAVNQVAILGEEYVGMRPSMKVREGDVVKKGQVLFEDKKNPGVIFTAPASGTITAINRGEKRVLQSVVINVEGDEKITFAKYSTEQLNTLSSEQVKQNLIESGLWTALRTRPFSKVPSIESEASSIFVNAMDTNPLAADPSVVLKEYSQDFTNGLTVLSRLFPSKPLHLCKAGDSNIPTADLENLQIHDFTGVHPAGLVGTHIHFIDPVGIQKTVWHINYQDVIAVGKLFTTGELYSERVISLAGPQVKEPRLVRTIIGANLSQLTQNELSAGKNRVISGSVLCGQIAKDSHDYLGRYALQVSVIAEGNEKEFFGWIMPQANKYSVTRTVLGHFSKKLFNFTTSENGGERAMVPIGSYERVMPLDILPTLLLRDLIVGDTDGAQELGCLELDEEDLALCSFVCPGKYEYGSILRQVLDKIEKEG</sequence>
<reference key="1">
    <citation type="journal article" date="2005" name="J. Bacteriol.">
        <title>Genomic sequence of an otitis media isolate of nontypeable Haemophilus influenzae: comparative study with H. influenzae serotype d, strain KW20.</title>
        <authorList>
            <person name="Harrison A."/>
            <person name="Dyer D.W."/>
            <person name="Gillaspy A."/>
            <person name="Ray W.C."/>
            <person name="Mungur R."/>
            <person name="Carson M.B."/>
            <person name="Zhong H."/>
            <person name="Gipson J."/>
            <person name="Gipson M."/>
            <person name="Johnson L.S."/>
            <person name="Lewis L."/>
            <person name="Bakaletz L.O."/>
            <person name="Munson R.S. Jr."/>
        </authorList>
    </citation>
    <scope>NUCLEOTIDE SEQUENCE [LARGE SCALE GENOMIC DNA]</scope>
    <source>
        <strain>86-028NP</strain>
    </source>
</reference>
<evidence type="ECO:0000255" key="1">
    <source>
        <dbReference type="HAMAP-Rule" id="MF_00425"/>
    </source>
</evidence>
<keyword id="KW-0406">Ion transport</keyword>
<keyword id="KW-0520">NAD</keyword>
<keyword id="KW-0915">Sodium</keyword>
<keyword id="KW-0739">Sodium transport</keyword>
<keyword id="KW-1278">Translocase</keyword>
<keyword id="KW-0813">Transport</keyword>
<keyword id="KW-0830">Ubiquinone</keyword>
<dbReference type="EC" id="7.2.1.1" evidence="1"/>
<dbReference type="EMBL" id="CP000057">
    <property type="protein sequence ID" value="AAX87223.1"/>
    <property type="molecule type" value="Genomic_DNA"/>
</dbReference>
<dbReference type="RefSeq" id="WP_005671165.1">
    <property type="nucleotide sequence ID" value="NC_007146.2"/>
</dbReference>
<dbReference type="SMR" id="Q4QP24"/>
<dbReference type="KEGG" id="hit:NTHI0254"/>
<dbReference type="HOGENOM" id="CLU_046656_0_0_6"/>
<dbReference type="Proteomes" id="UP000002525">
    <property type="component" value="Chromosome"/>
</dbReference>
<dbReference type="GO" id="GO:0016655">
    <property type="term" value="F:oxidoreductase activity, acting on NAD(P)H, quinone or similar compound as acceptor"/>
    <property type="evidence" value="ECO:0007669"/>
    <property type="project" value="UniProtKB-UniRule"/>
</dbReference>
<dbReference type="GO" id="GO:0006814">
    <property type="term" value="P:sodium ion transport"/>
    <property type="evidence" value="ECO:0007669"/>
    <property type="project" value="UniProtKB-UniRule"/>
</dbReference>
<dbReference type="Gene3D" id="2.40.50.100">
    <property type="match status" value="1"/>
</dbReference>
<dbReference type="HAMAP" id="MF_00425">
    <property type="entry name" value="NqrA"/>
    <property type="match status" value="1"/>
</dbReference>
<dbReference type="InterPro" id="IPR008703">
    <property type="entry name" value="NqrA"/>
</dbReference>
<dbReference type="InterPro" id="IPR056148">
    <property type="entry name" value="NQRA_2nd"/>
</dbReference>
<dbReference type="InterPro" id="IPR022615">
    <property type="entry name" value="NqrA_C_domain"/>
</dbReference>
<dbReference type="InterPro" id="IPR056147">
    <property type="entry name" value="NQRA_N"/>
</dbReference>
<dbReference type="NCBIfam" id="TIGR01936">
    <property type="entry name" value="nqrA"/>
    <property type="match status" value="1"/>
</dbReference>
<dbReference type="NCBIfam" id="NF003759">
    <property type="entry name" value="PRK05352.1-2"/>
    <property type="match status" value="1"/>
</dbReference>
<dbReference type="PANTHER" id="PTHR37839">
    <property type="entry name" value="NA(+)-TRANSLOCATING NADH-QUINONE REDUCTASE SUBUNIT A"/>
    <property type="match status" value="1"/>
</dbReference>
<dbReference type="PANTHER" id="PTHR37839:SF1">
    <property type="entry name" value="NA(+)-TRANSLOCATING NADH-QUINONE REDUCTASE SUBUNIT A"/>
    <property type="match status" value="1"/>
</dbReference>
<dbReference type="Pfam" id="PF24836">
    <property type="entry name" value="NQRA_2nd"/>
    <property type="match status" value="1"/>
</dbReference>
<dbReference type="Pfam" id="PF05896">
    <property type="entry name" value="NQRA_N"/>
    <property type="match status" value="1"/>
</dbReference>
<dbReference type="Pfam" id="PF11973">
    <property type="entry name" value="NQRA_SLBB"/>
    <property type="match status" value="1"/>
</dbReference>
<organism>
    <name type="scientific">Haemophilus influenzae (strain 86-028NP)</name>
    <dbReference type="NCBI Taxonomy" id="281310"/>
    <lineage>
        <taxon>Bacteria</taxon>
        <taxon>Pseudomonadati</taxon>
        <taxon>Pseudomonadota</taxon>
        <taxon>Gammaproteobacteria</taxon>
        <taxon>Pasteurellales</taxon>
        <taxon>Pasteurellaceae</taxon>
        <taxon>Haemophilus</taxon>
    </lineage>
</organism>
<proteinExistence type="inferred from homology"/>
<name>NQRA_HAEI8</name>
<gene>
    <name evidence="1" type="primary">nqrA</name>
    <name type="ordered locus">NTHI0254</name>
</gene>
<protein>
    <recommendedName>
        <fullName evidence="1">Na(+)-translocating NADH-quinone reductase subunit A</fullName>
        <shortName evidence="1">Na(+)-NQR subunit A</shortName>
        <shortName evidence="1">Na(+)-translocating NQR subunit A</shortName>
        <ecNumber evidence="1">7.2.1.1</ecNumber>
    </recommendedName>
    <alternativeName>
        <fullName evidence="1">NQR complex subunit A</fullName>
    </alternativeName>
    <alternativeName>
        <fullName evidence="1">NQR-1 subunit A</fullName>
    </alternativeName>
</protein>
<comment type="function">
    <text evidence="1">NQR complex catalyzes the reduction of ubiquinone-1 to ubiquinol by two successive reactions, coupled with the transport of Na(+) ions from the cytoplasm to the periplasm. NqrA to NqrE are probably involved in the second step, the conversion of ubisemiquinone to ubiquinol.</text>
</comment>
<comment type="catalytic activity">
    <reaction evidence="1">
        <text>a ubiquinone + n Na(+)(in) + NADH + H(+) = a ubiquinol + n Na(+)(out) + NAD(+)</text>
        <dbReference type="Rhea" id="RHEA:47748"/>
        <dbReference type="Rhea" id="RHEA-COMP:9565"/>
        <dbReference type="Rhea" id="RHEA-COMP:9566"/>
        <dbReference type="ChEBI" id="CHEBI:15378"/>
        <dbReference type="ChEBI" id="CHEBI:16389"/>
        <dbReference type="ChEBI" id="CHEBI:17976"/>
        <dbReference type="ChEBI" id="CHEBI:29101"/>
        <dbReference type="ChEBI" id="CHEBI:57540"/>
        <dbReference type="ChEBI" id="CHEBI:57945"/>
        <dbReference type="EC" id="7.2.1.1"/>
    </reaction>
</comment>
<comment type="subunit">
    <text evidence="1">Composed of six subunits; NqrA, NqrB, NqrC, NqrD, NqrE and NqrF.</text>
</comment>
<comment type="similarity">
    <text evidence="1">Belongs to the NqrA family.</text>
</comment>
<feature type="chain" id="PRO_1000060113" description="Na(+)-translocating NADH-quinone reductase subunit A">
    <location>
        <begin position="1"/>
        <end position="447"/>
    </location>
</feature>